<feature type="chain" id="PRO_0000435803" description="Sarcoplasmic/endoplasmic reticulum calcium ATPase regulator DWORF">
    <location>
        <begin position="1"/>
        <end position="34"/>
    </location>
</feature>
<feature type="transmembrane region" description="Helical" evidence="2">
    <location>
        <begin position="12"/>
        <end position="32"/>
    </location>
</feature>
<evidence type="ECO:0000250" key="1">
    <source>
        <dbReference type="UniProtKB" id="P0DN84"/>
    </source>
</evidence>
<evidence type="ECO:0000255" key="2"/>
<evidence type="ECO:0000269" key="3">
    <source>
    </source>
</evidence>
<evidence type="ECO:0000269" key="4">
    <source>
    </source>
</evidence>
<evidence type="ECO:0000269" key="5">
    <source>
    </source>
</evidence>
<evidence type="ECO:0000269" key="6">
    <source>
    </source>
</evidence>
<evidence type="ECO:0000303" key="7">
    <source>
    </source>
</evidence>
<evidence type="ECO:0000305" key="8"/>
<evidence type="ECO:0000312" key="9">
    <source>
        <dbReference type="MGI" id="MGI:5593461"/>
    </source>
</evidence>
<accession>P0DN83</accession>
<sequence>MAEKESTSPHLIVPILLLVGWIVGCIIVIYIVFF</sequence>
<comment type="function">
    <text evidence="1 3 4 6">Enhances the activity of ATP2A1/SERCA1 ATPase in sarcoplasmic reticulum by displacing ATP2A1/SERCA1 inhibitors, thereby acting as a key regulator of skeletal muscle activity (PubMed:26816378, PubMed:30299255). Also enhances the activity of the ATP2A2/SERCA2 ATPase (By similarity). Does not directly stimulate SERCA pump activity (PubMed:26816378). Binds preferentially to the phosphorylated E1 and E2 conformational forms of ATP2A2 which predominate at high Ca(2+) concentrations during the systolic phase of the cardiac cycle (PubMed:35605666). Competes with ATP2A2 inhibitor phospholamban (PLN) for binding to ATP2A2 and displaces PLN (By similarity). Can activate ATP2A2 directly in the absence of PLN (By similarity). Also enhances sarcoplasmic reticulum Ca(2+) uptake and myocyte contractility by displacing the SERCA inhibitory peptides sarcolipin (SLN) and myoregulin (MRLN) (PubMed:26816378, PubMed:30299255).</text>
</comment>
<comment type="subunit">
    <text evidence="1 3 4 5">Homooligomer (PubMed:31449798). Can also form heterooligomers with other sarcoplasmic/endoplasmic reticulum calcium ATPase (SERCA) regulators ARLN, ERLN, PLN and SLN (By similarity). Monomer (PubMed:30299255, PubMed:31449798). Interacts with ATP2A1/SERCA1; the interaction results in activation of ATP2A1 (PubMed:26816378, PubMed:30299255). Interacts as a monomer with ATP2A2/SERCA2; the interaction results in activation of ATP2A2 (PubMed:31449798).</text>
</comment>
<comment type="subcellular location">
    <subcellularLocation>
        <location evidence="3">Sarcoplasmic reticulum membrane</location>
        <topology evidence="2">Single-pass membrane protein</topology>
    </subcellularLocation>
</comment>
<comment type="tissue specificity">
    <text evidence="3">Highly expressed in heart (at protein level). Detected in heart and soleus, a postural muscle group of the hindlimb containing the highest enrichment of slow-twitch muscle fibers. Also expressed in diaphragm, which contains some slow-twitch fibers. Not detected in the quadriceps, a fast-twitch muscle group, or in cardiac atrial muscle. Not expressed in the prenatal heart but gradually increases in abundance postnatally.</text>
</comment>
<comment type="domain">
    <text evidence="1">The transmembrane domain is sufficient to compete with phospholamban (PLN) for binding to ATP2A2.</text>
</comment>
<comment type="disruption phenotype">
    <text evidence="3">Mice produce offspring at expected Mendelian ratios. Slow-twitch skeletal muscle fibers display delayed Ca(2+) clearance and relaxation and reduced SERCA activity. No significant differences are observed in peak muscle force and no differences are observed in relaxation rates at low, non-tetanic stimulation frequencies. However at tetanus-inducing frequencies, relaxation rates are significantly slowed after tetanus.</text>
</comment>
<name>DWORF_MOUSE</name>
<reference key="1">
    <citation type="journal article" date="2009" name="PLoS Biol.">
        <title>Lineage-specific biology revealed by a finished genome assembly of the mouse.</title>
        <authorList>
            <person name="Church D.M."/>
            <person name="Goodstadt L."/>
            <person name="Hillier L.W."/>
            <person name="Zody M.C."/>
            <person name="Goldstein S."/>
            <person name="She X."/>
            <person name="Bult C.J."/>
            <person name="Agarwala R."/>
            <person name="Cherry J.L."/>
            <person name="DiCuccio M."/>
            <person name="Hlavina W."/>
            <person name="Kapustin Y."/>
            <person name="Meric P."/>
            <person name="Maglott D."/>
            <person name="Birtle Z."/>
            <person name="Marques A.C."/>
            <person name="Graves T."/>
            <person name="Zhou S."/>
            <person name="Teague B."/>
            <person name="Potamousis K."/>
            <person name="Churas C."/>
            <person name="Place M."/>
            <person name="Herschleb J."/>
            <person name="Runnheim R."/>
            <person name="Forrest D."/>
            <person name="Amos-Landgraf J."/>
            <person name="Schwartz D.C."/>
            <person name="Cheng Z."/>
            <person name="Lindblad-Toh K."/>
            <person name="Eichler E.E."/>
            <person name="Ponting C.P."/>
        </authorList>
    </citation>
    <scope>NUCLEOTIDE SEQUENCE [LARGE SCALE GENOMIC DNA]</scope>
    <source>
        <strain>C57BL/6J</strain>
    </source>
</reference>
<reference key="2">
    <citation type="journal article" date="2016" name="Science">
        <title>Muscle physiology. A peptide encoded by a transcript annotated as long noncoding RNA enhances SERCA activity in muscle.</title>
        <authorList>
            <person name="Nelson B.R."/>
            <person name="Makarewich C.A."/>
            <person name="Anderson D.M."/>
            <person name="Winders B.R."/>
            <person name="Troupes C.D."/>
            <person name="Wu F."/>
            <person name="Reese A.L."/>
            <person name="McAnally J.R."/>
            <person name="Chen X."/>
            <person name="Kavalali E.T."/>
            <person name="Cannon S.C."/>
            <person name="Houser S.R."/>
            <person name="Bassel-Duby R."/>
            <person name="Olson E.N."/>
        </authorList>
    </citation>
    <scope>FUNCTION</scope>
    <scope>SUBCELLULAR LOCATION</scope>
    <scope>TISSUE SPECIFICITY</scope>
    <scope>INTERACTION WITH ATP2A1</scope>
    <scope>DISRUPTION PHENOTYPE</scope>
</reference>
<reference key="3">
    <citation type="journal article" date="2018" name="Elife">
        <title>The DWORF micropeptide enhances contractility and prevents heart failure in a mouse model of dilated cardiomyopathy.</title>
        <authorList>
            <person name="Makarewich C.A."/>
            <person name="Munir A.Z."/>
            <person name="Schiattarella G.G."/>
            <person name="Bezprozvannaya S."/>
            <person name="Raguimova O.N."/>
            <person name="Cho E.E."/>
            <person name="Vidal A.H."/>
            <person name="Robia S.L."/>
            <person name="Bassel-Duby R."/>
            <person name="Olson E.N."/>
        </authorList>
    </citation>
    <scope>SUBUNIT</scope>
    <scope>FUNCTION</scope>
    <scope>INTERACTION WITH ATP2A1</scope>
</reference>
<reference key="4">
    <citation type="journal article" date="2019" name="J. Mol. Biol.">
        <title>Newly Discovered Micropeptide Regulators of SERCA Form Oligomers but Bind to the Pump as Monomers.</title>
        <authorList>
            <person name="Singh D.R."/>
            <person name="Dalton M.P."/>
            <person name="Cho E.E."/>
            <person name="Pribadi M.P."/>
            <person name="Zak T.J."/>
            <person name="Seflova J."/>
            <person name="Makarewich C.A."/>
            <person name="Olson E.N."/>
            <person name="Robia S.L."/>
        </authorList>
    </citation>
    <scope>INTERACTION WITH ATP2A2</scope>
</reference>
<reference key="5">
    <citation type="journal article" date="2022" name="J. Biol. Chem.">
        <title>Inhibitory and stimulatory micropeptides preferentially bind to different conformations of the cardiac calcium pump.</title>
        <authorList>
            <person name="Cleary S.R."/>
            <person name="Fang X."/>
            <person name="Cho E.E."/>
            <person name="Pribadi M.P."/>
            <person name="Seflova J."/>
            <person name="Beach J.R."/>
            <person name="Kekenes-Huskey P.M."/>
            <person name="Robia S.L."/>
        </authorList>
    </citation>
    <scope>FUNCTION</scope>
</reference>
<gene>
    <name evidence="9" type="primary">Strit1</name>
</gene>
<protein>
    <recommendedName>
        <fullName evidence="8">Sarcoplasmic/endoplasmic reticulum calcium ATPase regulator DWORF</fullName>
        <shortName evidence="8">SERCA regulator DWORF</shortName>
    </recommendedName>
    <alternativeName>
        <fullName evidence="7">Dwarf open reading frame</fullName>
        <shortName evidence="7">DWORF</shortName>
    </alternativeName>
    <alternativeName>
        <fullName evidence="9">Small transmembrane regulator of ion transport 1</fullName>
    </alternativeName>
</protein>
<dbReference type="EMBL" id="GL456099">
    <property type="status" value="NOT_ANNOTATED_CDS"/>
    <property type="molecule type" value="Genomic_DNA"/>
</dbReference>
<dbReference type="CCDS" id="CCDS89629.1"/>
<dbReference type="RefSeq" id="NP_001356235.1">
    <property type="nucleotide sequence ID" value="NM_001369306.1"/>
</dbReference>
<dbReference type="SMR" id="P0DN83"/>
<dbReference type="FunCoup" id="P0DN83">
    <property type="interactions" value="32"/>
</dbReference>
<dbReference type="STRING" id="10090.ENSMUSP00000147363"/>
<dbReference type="Ensembl" id="ENSMUST00000192926.2">
    <property type="protein sequence ID" value="ENSMUSP00000147363.2"/>
    <property type="gene ID" value="ENSMUSG00000103476.2"/>
</dbReference>
<dbReference type="GeneID" id="102637511"/>
<dbReference type="AGR" id="MGI:5593461"/>
<dbReference type="MGI" id="MGI:5593461">
    <property type="gene designation" value="Strit1"/>
</dbReference>
<dbReference type="VEuPathDB" id="HostDB:ENSMUSG00000103476"/>
<dbReference type="GeneTree" id="ENSGT01100000265011"/>
<dbReference type="InParanoid" id="P0DN83"/>
<dbReference type="OrthoDB" id="9030109at2759"/>
<dbReference type="PRO" id="PR:P0DN83"/>
<dbReference type="Proteomes" id="UP000000589">
    <property type="component" value="Chromosome 3"/>
</dbReference>
<dbReference type="Bgee" id="ENSMUSG00000103476">
    <property type="expression patterns" value="Expressed in striatum and 15 other cell types or tissues"/>
</dbReference>
<dbReference type="GO" id="GO:0016529">
    <property type="term" value="C:sarcoplasmic reticulum"/>
    <property type="evidence" value="ECO:0000314"/>
    <property type="project" value="MGI"/>
</dbReference>
<dbReference type="GO" id="GO:0033017">
    <property type="term" value="C:sarcoplasmic reticulum membrane"/>
    <property type="evidence" value="ECO:0000314"/>
    <property type="project" value="UniProtKB"/>
</dbReference>
<dbReference type="GO" id="GO:0008047">
    <property type="term" value="F:enzyme activator activity"/>
    <property type="evidence" value="ECO:0000314"/>
    <property type="project" value="UniProtKB"/>
</dbReference>
<dbReference type="GO" id="GO:1901896">
    <property type="term" value="P:positive regulation of ATPase-coupled calcium transmembrane transporter activity"/>
    <property type="evidence" value="ECO:0000315"/>
    <property type="project" value="UniProtKB"/>
</dbReference>
<dbReference type="GO" id="GO:0090280">
    <property type="term" value="P:positive regulation of calcium ion import"/>
    <property type="evidence" value="ECO:0000315"/>
    <property type="project" value="MGI"/>
</dbReference>
<dbReference type="GO" id="GO:1902082">
    <property type="term" value="P:positive regulation of calcium ion import into sarcoplasmic reticulum"/>
    <property type="evidence" value="ECO:0000314"/>
    <property type="project" value="UniProtKB"/>
</dbReference>
<dbReference type="GO" id="GO:0106134">
    <property type="term" value="P:positive regulation of cardiac muscle cell contraction"/>
    <property type="evidence" value="ECO:0000315"/>
    <property type="project" value="UniProtKB"/>
</dbReference>
<dbReference type="GO" id="GO:1901894">
    <property type="term" value="P:regulation of ATPase-coupled calcium transmembrane transporter activity"/>
    <property type="evidence" value="ECO:0000314"/>
    <property type="project" value="UniProtKB"/>
</dbReference>
<dbReference type="GO" id="GO:0031449">
    <property type="term" value="P:regulation of slow-twitch skeletal muscle fiber contraction"/>
    <property type="evidence" value="ECO:0000314"/>
    <property type="project" value="UniProtKB"/>
</dbReference>
<dbReference type="CDD" id="cd20247">
    <property type="entry name" value="DWORF"/>
    <property type="match status" value="1"/>
</dbReference>
<dbReference type="InterPro" id="IPR044529">
    <property type="entry name" value="DWORF"/>
</dbReference>
<dbReference type="Pfam" id="PF22030">
    <property type="entry name" value="DWORF"/>
    <property type="match status" value="1"/>
</dbReference>
<keyword id="KW-0472">Membrane</keyword>
<keyword id="KW-1185">Reference proteome</keyword>
<keyword id="KW-0703">Sarcoplasmic reticulum</keyword>
<keyword id="KW-0812">Transmembrane</keyword>
<keyword id="KW-1133">Transmembrane helix</keyword>
<organism>
    <name type="scientific">Mus musculus</name>
    <name type="common">Mouse</name>
    <dbReference type="NCBI Taxonomy" id="10090"/>
    <lineage>
        <taxon>Eukaryota</taxon>
        <taxon>Metazoa</taxon>
        <taxon>Chordata</taxon>
        <taxon>Craniata</taxon>
        <taxon>Vertebrata</taxon>
        <taxon>Euteleostomi</taxon>
        <taxon>Mammalia</taxon>
        <taxon>Eutheria</taxon>
        <taxon>Euarchontoglires</taxon>
        <taxon>Glires</taxon>
        <taxon>Rodentia</taxon>
        <taxon>Myomorpha</taxon>
        <taxon>Muroidea</taxon>
        <taxon>Muridae</taxon>
        <taxon>Murinae</taxon>
        <taxon>Mus</taxon>
        <taxon>Mus</taxon>
    </lineage>
</organism>
<proteinExistence type="evidence at protein level"/>